<evidence type="ECO:0000255" key="1">
    <source>
        <dbReference type="HAMAP-Rule" id="MF_01043"/>
    </source>
</evidence>
<proteinExistence type="inferred from homology"/>
<sequence>MNIGNLIGIIILFLFIGYFIGNILFGILISKSQGVDIRTLGSGNVGATNVTRNLGRISGAIVMVLDFFKSWFSTFVCLLIYKALRYSIGDESAYANAGVIIYLGGFAAIIGHCFPCFYFYTLFKTKFNFEEAKKYSGGKGVSSAAGFAASISPWMFFICFVLFWSICLISKYVSLASIVTVFLLPIWSLIPHLNYFYMLDVAQANINPIPPFNRPFEIAAIFNYSLNWWYILVTFLLELLTAVLVIYRHKENIVRLIKGEERKAFAKKTNTH</sequence>
<reference key="1">
    <citation type="journal article" date="2002" name="Nucleic Acids Res.">
        <title>The complete genomic sequence of Mycoplasma penetrans, an intracellular bacterial pathogen in humans.</title>
        <authorList>
            <person name="Sasaki Y."/>
            <person name="Ishikawa J."/>
            <person name="Yamashita A."/>
            <person name="Oshima K."/>
            <person name="Kenri T."/>
            <person name="Furuya K."/>
            <person name="Yoshino C."/>
            <person name="Horino A."/>
            <person name="Shiba T."/>
            <person name="Sasaki T."/>
            <person name="Hattori M."/>
        </authorList>
    </citation>
    <scope>NUCLEOTIDE SEQUENCE [LARGE SCALE GENOMIC DNA]</scope>
    <source>
        <strain>HF-2</strain>
    </source>
</reference>
<protein>
    <recommendedName>
        <fullName evidence="1">Glycerol-3-phosphate acyltransferase</fullName>
    </recommendedName>
    <alternativeName>
        <fullName evidence="1">Acyl-PO4 G3P acyltransferase</fullName>
    </alternativeName>
    <alternativeName>
        <fullName evidence="1">Acyl-phosphate--glycerol-3-phosphate acyltransferase</fullName>
    </alternativeName>
    <alternativeName>
        <fullName evidence="1">G3P acyltransferase</fullName>
        <shortName evidence="1">GPAT</shortName>
        <ecNumber evidence="1">2.3.1.275</ecNumber>
    </alternativeName>
    <alternativeName>
        <fullName evidence="1">Lysophosphatidic acid synthase</fullName>
        <shortName evidence="1">LPA synthase</shortName>
    </alternativeName>
</protein>
<name>PLSY_MALP2</name>
<accession>P59248</accession>
<dbReference type="EC" id="2.3.1.275" evidence="1"/>
<dbReference type="EMBL" id="BA000026">
    <property type="protein sequence ID" value="BAC44192.1"/>
    <property type="molecule type" value="Genomic_DNA"/>
</dbReference>
<dbReference type="RefSeq" id="WP_011077228.1">
    <property type="nucleotide sequence ID" value="NC_004432.1"/>
</dbReference>
<dbReference type="SMR" id="P59248"/>
<dbReference type="FunCoup" id="P59248">
    <property type="interactions" value="91"/>
</dbReference>
<dbReference type="STRING" id="272633.gene:10731518"/>
<dbReference type="KEGG" id="mpe:MYPE4020"/>
<dbReference type="eggNOG" id="COG0344">
    <property type="taxonomic scope" value="Bacteria"/>
</dbReference>
<dbReference type="HOGENOM" id="CLU_081254_3_0_14"/>
<dbReference type="InParanoid" id="P59248"/>
<dbReference type="UniPathway" id="UPA00085"/>
<dbReference type="Proteomes" id="UP000002522">
    <property type="component" value="Chromosome"/>
</dbReference>
<dbReference type="GO" id="GO:0005886">
    <property type="term" value="C:plasma membrane"/>
    <property type="evidence" value="ECO:0007669"/>
    <property type="project" value="UniProtKB-SubCell"/>
</dbReference>
<dbReference type="GO" id="GO:0043772">
    <property type="term" value="F:acyl-phosphate glycerol-3-phosphate acyltransferase activity"/>
    <property type="evidence" value="ECO:0007669"/>
    <property type="project" value="UniProtKB-UniRule"/>
</dbReference>
<dbReference type="GO" id="GO:0008654">
    <property type="term" value="P:phospholipid biosynthetic process"/>
    <property type="evidence" value="ECO:0007669"/>
    <property type="project" value="UniProtKB-UniRule"/>
</dbReference>
<dbReference type="HAMAP" id="MF_01043">
    <property type="entry name" value="PlsY"/>
    <property type="match status" value="1"/>
</dbReference>
<dbReference type="InterPro" id="IPR003811">
    <property type="entry name" value="G3P_acylTferase_PlsY"/>
</dbReference>
<dbReference type="NCBIfam" id="TIGR00023">
    <property type="entry name" value="glycerol-3-phosphate 1-O-acyltransferase PlsY"/>
    <property type="match status" value="1"/>
</dbReference>
<dbReference type="PANTHER" id="PTHR30309:SF0">
    <property type="entry name" value="GLYCEROL-3-PHOSPHATE ACYLTRANSFERASE-RELATED"/>
    <property type="match status" value="1"/>
</dbReference>
<dbReference type="PANTHER" id="PTHR30309">
    <property type="entry name" value="INNER MEMBRANE PROTEIN YGIH"/>
    <property type="match status" value="1"/>
</dbReference>
<dbReference type="Pfam" id="PF02660">
    <property type="entry name" value="G3P_acyltransf"/>
    <property type="match status" value="1"/>
</dbReference>
<dbReference type="SMART" id="SM01207">
    <property type="entry name" value="G3P_acyltransf"/>
    <property type="match status" value="1"/>
</dbReference>
<keyword id="KW-1003">Cell membrane</keyword>
<keyword id="KW-0444">Lipid biosynthesis</keyword>
<keyword id="KW-0443">Lipid metabolism</keyword>
<keyword id="KW-0472">Membrane</keyword>
<keyword id="KW-0594">Phospholipid biosynthesis</keyword>
<keyword id="KW-1208">Phospholipid metabolism</keyword>
<keyword id="KW-1185">Reference proteome</keyword>
<keyword id="KW-0808">Transferase</keyword>
<keyword id="KW-0812">Transmembrane</keyword>
<keyword id="KW-1133">Transmembrane helix</keyword>
<feature type="chain" id="PRO_0000188405" description="Glycerol-3-phosphate acyltransferase">
    <location>
        <begin position="1"/>
        <end position="272"/>
    </location>
</feature>
<feature type="transmembrane region" description="Helical" evidence="1">
    <location>
        <begin position="9"/>
        <end position="29"/>
    </location>
</feature>
<feature type="transmembrane region" description="Helical" evidence="1">
    <location>
        <begin position="60"/>
        <end position="80"/>
    </location>
</feature>
<feature type="transmembrane region" description="Helical" evidence="1">
    <location>
        <begin position="99"/>
        <end position="119"/>
    </location>
</feature>
<feature type="transmembrane region" description="Helical" evidence="1">
    <location>
        <begin position="149"/>
        <end position="169"/>
    </location>
</feature>
<feature type="transmembrane region" description="Helical" evidence="1">
    <location>
        <begin position="173"/>
        <end position="193"/>
    </location>
</feature>
<feature type="transmembrane region" description="Helical" evidence="1">
    <location>
        <begin position="226"/>
        <end position="246"/>
    </location>
</feature>
<gene>
    <name evidence="1" type="primary">plsY</name>
    <name type="ordered locus">MYPE4020</name>
</gene>
<organism>
    <name type="scientific">Malacoplasma penetrans (strain HF-2)</name>
    <name type="common">Mycoplasma penetrans</name>
    <dbReference type="NCBI Taxonomy" id="272633"/>
    <lineage>
        <taxon>Bacteria</taxon>
        <taxon>Bacillati</taxon>
        <taxon>Mycoplasmatota</taxon>
        <taxon>Mycoplasmoidales</taxon>
        <taxon>Mycoplasmoidaceae</taxon>
        <taxon>Malacoplasma</taxon>
    </lineage>
</organism>
<comment type="function">
    <text evidence="1">Catalyzes the transfer of an acyl group from acyl-phosphate (acyl-PO(4)) to glycerol-3-phosphate (G3P) to form lysophosphatidic acid (LPA). This enzyme utilizes acyl-phosphate as fatty acyl donor, but not acyl-CoA or acyl-ACP.</text>
</comment>
<comment type="catalytic activity">
    <reaction evidence="1">
        <text>an acyl phosphate + sn-glycerol 3-phosphate = a 1-acyl-sn-glycero-3-phosphate + phosphate</text>
        <dbReference type="Rhea" id="RHEA:34075"/>
        <dbReference type="ChEBI" id="CHEBI:43474"/>
        <dbReference type="ChEBI" id="CHEBI:57597"/>
        <dbReference type="ChEBI" id="CHEBI:57970"/>
        <dbReference type="ChEBI" id="CHEBI:59918"/>
        <dbReference type="EC" id="2.3.1.275"/>
    </reaction>
</comment>
<comment type="pathway">
    <text evidence="1">Lipid metabolism; phospholipid metabolism.</text>
</comment>
<comment type="subunit">
    <text evidence="1">Probably interacts with PlsX.</text>
</comment>
<comment type="subcellular location">
    <subcellularLocation>
        <location evidence="1">Cell membrane</location>
        <topology evidence="1">Multi-pass membrane protein</topology>
    </subcellularLocation>
</comment>
<comment type="similarity">
    <text evidence="1">Belongs to the PlsY family.</text>
</comment>